<evidence type="ECO:0000255" key="1">
    <source>
        <dbReference type="HAMAP-Rule" id="MF_01210"/>
    </source>
</evidence>
<dbReference type="EC" id="6.3.4.16" evidence="1"/>
<dbReference type="EC" id="6.3.5.5" evidence="1"/>
<dbReference type="EMBL" id="BX571856">
    <property type="protein sequence ID" value="CAG40181.1"/>
    <property type="molecule type" value="Genomic_DNA"/>
</dbReference>
<dbReference type="RefSeq" id="WP_001126273.1">
    <property type="nucleotide sequence ID" value="NC_002952.2"/>
</dbReference>
<dbReference type="SMR" id="Q6GHN2"/>
<dbReference type="KEGG" id="sar:SAR1179"/>
<dbReference type="HOGENOM" id="CLU_000513_1_2_9"/>
<dbReference type="UniPathway" id="UPA00068">
    <property type="reaction ID" value="UER00171"/>
</dbReference>
<dbReference type="UniPathway" id="UPA00070">
    <property type="reaction ID" value="UER00115"/>
</dbReference>
<dbReference type="Proteomes" id="UP000000596">
    <property type="component" value="Chromosome"/>
</dbReference>
<dbReference type="GO" id="GO:0005737">
    <property type="term" value="C:cytoplasm"/>
    <property type="evidence" value="ECO:0007669"/>
    <property type="project" value="TreeGrafter"/>
</dbReference>
<dbReference type="GO" id="GO:0005524">
    <property type="term" value="F:ATP binding"/>
    <property type="evidence" value="ECO:0007669"/>
    <property type="project" value="UniProtKB-UniRule"/>
</dbReference>
<dbReference type="GO" id="GO:0004087">
    <property type="term" value="F:carbamoyl-phosphate synthase (ammonia) activity"/>
    <property type="evidence" value="ECO:0007669"/>
    <property type="project" value="RHEA"/>
</dbReference>
<dbReference type="GO" id="GO:0004088">
    <property type="term" value="F:carbamoyl-phosphate synthase (glutamine-hydrolyzing) activity"/>
    <property type="evidence" value="ECO:0007669"/>
    <property type="project" value="UniProtKB-UniRule"/>
</dbReference>
<dbReference type="GO" id="GO:0046872">
    <property type="term" value="F:metal ion binding"/>
    <property type="evidence" value="ECO:0007669"/>
    <property type="project" value="UniProtKB-KW"/>
</dbReference>
<dbReference type="GO" id="GO:0044205">
    <property type="term" value="P:'de novo' UMP biosynthetic process"/>
    <property type="evidence" value="ECO:0007669"/>
    <property type="project" value="UniProtKB-UniRule"/>
</dbReference>
<dbReference type="GO" id="GO:0006541">
    <property type="term" value="P:glutamine metabolic process"/>
    <property type="evidence" value="ECO:0007669"/>
    <property type="project" value="TreeGrafter"/>
</dbReference>
<dbReference type="GO" id="GO:0006526">
    <property type="term" value="P:L-arginine biosynthetic process"/>
    <property type="evidence" value="ECO:0007669"/>
    <property type="project" value="UniProtKB-UniRule"/>
</dbReference>
<dbReference type="CDD" id="cd01424">
    <property type="entry name" value="MGS_CPS_II"/>
    <property type="match status" value="1"/>
</dbReference>
<dbReference type="FunFam" id="1.10.1030.10:FF:000002">
    <property type="entry name" value="Carbamoyl-phosphate synthase large chain"/>
    <property type="match status" value="1"/>
</dbReference>
<dbReference type="FunFam" id="3.30.1490.20:FF:000001">
    <property type="entry name" value="Carbamoyl-phosphate synthase large chain"/>
    <property type="match status" value="1"/>
</dbReference>
<dbReference type="FunFam" id="3.30.470.20:FF:000001">
    <property type="entry name" value="Carbamoyl-phosphate synthase large chain"/>
    <property type="match status" value="1"/>
</dbReference>
<dbReference type="FunFam" id="3.30.470.20:FF:000026">
    <property type="entry name" value="Carbamoyl-phosphate synthase large chain"/>
    <property type="match status" value="1"/>
</dbReference>
<dbReference type="FunFam" id="3.40.50.1380:FF:000011">
    <property type="entry name" value="Carbamoyl-phosphate synthase large chain"/>
    <property type="match status" value="1"/>
</dbReference>
<dbReference type="FunFam" id="3.40.50.20:FF:000001">
    <property type="entry name" value="Carbamoyl-phosphate synthase large chain"/>
    <property type="match status" value="2"/>
</dbReference>
<dbReference type="Gene3D" id="3.40.50.20">
    <property type="match status" value="2"/>
</dbReference>
<dbReference type="Gene3D" id="3.30.1490.20">
    <property type="entry name" value="ATP-grasp fold, A domain"/>
    <property type="match status" value="1"/>
</dbReference>
<dbReference type="Gene3D" id="3.30.470.20">
    <property type="entry name" value="ATP-grasp fold, B domain"/>
    <property type="match status" value="2"/>
</dbReference>
<dbReference type="Gene3D" id="1.10.1030.10">
    <property type="entry name" value="Carbamoyl-phosphate synthetase, large subunit oligomerisation domain"/>
    <property type="match status" value="1"/>
</dbReference>
<dbReference type="Gene3D" id="3.40.50.1380">
    <property type="entry name" value="Methylglyoxal synthase-like domain"/>
    <property type="match status" value="1"/>
</dbReference>
<dbReference type="HAMAP" id="MF_01210_A">
    <property type="entry name" value="CPSase_L_chain_A"/>
    <property type="match status" value="1"/>
</dbReference>
<dbReference type="HAMAP" id="MF_01210_B">
    <property type="entry name" value="CPSase_L_chain_B"/>
    <property type="match status" value="1"/>
</dbReference>
<dbReference type="InterPro" id="IPR011761">
    <property type="entry name" value="ATP-grasp"/>
</dbReference>
<dbReference type="InterPro" id="IPR013815">
    <property type="entry name" value="ATP_grasp_subdomain_1"/>
</dbReference>
<dbReference type="InterPro" id="IPR006275">
    <property type="entry name" value="CarbamoylP_synth_lsu"/>
</dbReference>
<dbReference type="InterPro" id="IPR005480">
    <property type="entry name" value="CarbamoylP_synth_lsu_oligo"/>
</dbReference>
<dbReference type="InterPro" id="IPR036897">
    <property type="entry name" value="CarbamoylP_synth_lsu_oligo_sf"/>
</dbReference>
<dbReference type="InterPro" id="IPR005479">
    <property type="entry name" value="CbamoylP_synth_lsu-like_ATP-bd"/>
</dbReference>
<dbReference type="InterPro" id="IPR005483">
    <property type="entry name" value="CbamoylP_synth_lsu_CPSase_dom"/>
</dbReference>
<dbReference type="InterPro" id="IPR011607">
    <property type="entry name" value="MGS-like_dom"/>
</dbReference>
<dbReference type="InterPro" id="IPR036914">
    <property type="entry name" value="MGS-like_dom_sf"/>
</dbReference>
<dbReference type="InterPro" id="IPR033937">
    <property type="entry name" value="MGS_CPS_CarB"/>
</dbReference>
<dbReference type="InterPro" id="IPR016185">
    <property type="entry name" value="PreATP-grasp_dom_sf"/>
</dbReference>
<dbReference type="NCBIfam" id="TIGR01369">
    <property type="entry name" value="CPSaseII_lrg"/>
    <property type="match status" value="1"/>
</dbReference>
<dbReference type="NCBIfam" id="NF003671">
    <property type="entry name" value="PRK05294.1"/>
    <property type="match status" value="1"/>
</dbReference>
<dbReference type="NCBIfam" id="NF009455">
    <property type="entry name" value="PRK12815.1"/>
    <property type="match status" value="1"/>
</dbReference>
<dbReference type="PANTHER" id="PTHR11405:SF53">
    <property type="entry name" value="CARBAMOYL-PHOSPHATE SYNTHASE [AMMONIA], MITOCHONDRIAL"/>
    <property type="match status" value="1"/>
</dbReference>
<dbReference type="PANTHER" id="PTHR11405">
    <property type="entry name" value="CARBAMOYLTRANSFERASE FAMILY MEMBER"/>
    <property type="match status" value="1"/>
</dbReference>
<dbReference type="Pfam" id="PF02786">
    <property type="entry name" value="CPSase_L_D2"/>
    <property type="match status" value="2"/>
</dbReference>
<dbReference type="Pfam" id="PF02787">
    <property type="entry name" value="CPSase_L_D3"/>
    <property type="match status" value="1"/>
</dbReference>
<dbReference type="Pfam" id="PF02142">
    <property type="entry name" value="MGS"/>
    <property type="match status" value="1"/>
</dbReference>
<dbReference type="PRINTS" id="PR00098">
    <property type="entry name" value="CPSASE"/>
</dbReference>
<dbReference type="SMART" id="SM01096">
    <property type="entry name" value="CPSase_L_D3"/>
    <property type="match status" value="1"/>
</dbReference>
<dbReference type="SMART" id="SM01209">
    <property type="entry name" value="GARS_A"/>
    <property type="match status" value="1"/>
</dbReference>
<dbReference type="SMART" id="SM00851">
    <property type="entry name" value="MGS"/>
    <property type="match status" value="1"/>
</dbReference>
<dbReference type="SUPFAM" id="SSF48108">
    <property type="entry name" value="Carbamoyl phosphate synthetase, large subunit connection domain"/>
    <property type="match status" value="1"/>
</dbReference>
<dbReference type="SUPFAM" id="SSF56059">
    <property type="entry name" value="Glutathione synthetase ATP-binding domain-like"/>
    <property type="match status" value="2"/>
</dbReference>
<dbReference type="SUPFAM" id="SSF52335">
    <property type="entry name" value="Methylglyoxal synthase-like"/>
    <property type="match status" value="1"/>
</dbReference>
<dbReference type="SUPFAM" id="SSF52440">
    <property type="entry name" value="PreATP-grasp domain"/>
    <property type="match status" value="2"/>
</dbReference>
<dbReference type="PROSITE" id="PS50975">
    <property type="entry name" value="ATP_GRASP"/>
    <property type="match status" value="2"/>
</dbReference>
<dbReference type="PROSITE" id="PS00866">
    <property type="entry name" value="CPSASE_1"/>
    <property type="match status" value="2"/>
</dbReference>
<dbReference type="PROSITE" id="PS00867">
    <property type="entry name" value="CPSASE_2"/>
    <property type="match status" value="2"/>
</dbReference>
<dbReference type="PROSITE" id="PS51855">
    <property type="entry name" value="MGS"/>
    <property type="match status" value="1"/>
</dbReference>
<comment type="function">
    <text evidence="1">Large subunit of the glutamine-dependent carbamoyl phosphate synthetase (CPSase). CPSase catalyzes the formation of carbamoyl phosphate from the ammonia moiety of glutamine, carbonate, and phosphate donated by ATP, constituting the first step of 2 biosynthetic pathways, one leading to arginine and/or urea and the other to pyrimidine nucleotides. The large subunit (synthetase) binds the substrates ammonia (free or transferred from glutamine from the small subunit), hydrogencarbonate and ATP and carries out an ATP-coupled ligase reaction, activating hydrogencarbonate by forming carboxy phosphate which reacts with ammonia to form carbamoyl phosphate.</text>
</comment>
<comment type="catalytic activity">
    <reaction evidence="1">
        <text>hydrogencarbonate + L-glutamine + 2 ATP + H2O = carbamoyl phosphate + L-glutamate + 2 ADP + phosphate + 2 H(+)</text>
        <dbReference type="Rhea" id="RHEA:18633"/>
        <dbReference type="ChEBI" id="CHEBI:15377"/>
        <dbReference type="ChEBI" id="CHEBI:15378"/>
        <dbReference type="ChEBI" id="CHEBI:17544"/>
        <dbReference type="ChEBI" id="CHEBI:29985"/>
        <dbReference type="ChEBI" id="CHEBI:30616"/>
        <dbReference type="ChEBI" id="CHEBI:43474"/>
        <dbReference type="ChEBI" id="CHEBI:58228"/>
        <dbReference type="ChEBI" id="CHEBI:58359"/>
        <dbReference type="ChEBI" id="CHEBI:456216"/>
        <dbReference type="EC" id="6.3.5.5"/>
    </reaction>
</comment>
<comment type="catalytic activity">
    <molecule>Carbamoyl phosphate synthase large chain</molecule>
    <reaction evidence="1">
        <text>hydrogencarbonate + NH4(+) + 2 ATP = carbamoyl phosphate + 2 ADP + phosphate + 2 H(+)</text>
        <dbReference type="Rhea" id="RHEA:18029"/>
        <dbReference type="ChEBI" id="CHEBI:15378"/>
        <dbReference type="ChEBI" id="CHEBI:17544"/>
        <dbReference type="ChEBI" id="CHEBI:28938"/>
        <dbReference type="ChEBI" id="CHEBI:30616"/>
        <dbReference type="ChEBI" id="CHEBI:43474"/>
        <dbReference type="ChEBI" id="CHEBI:58228"/>
        <dbReference type="ChEBI" id="CHEBI:456216"/>
        <dbReference type="EC" id="6.3.4.16"/>
    </reaction>
</comment>
<comment type="cofactor">
    <cofactor evidence="1">
        <name>Mg(2+)</name>
        <dbReference type="ChEBI" id="CHEBI:18420"/>
    </cofactor>
    <cofactor evidence="1">
        <name>Mn(2+)</name>
        <dbReference type="ChEBI" id="CHEBI:29035"/>
    </cofactor>
    <text evidence="1">Binds 4 Mg(2+) or Mn(2+) ions per subunit.</text>
</comment>
<comment type="pathway">
    <text evidence="1">Amino-acid biosynthesis; L-arginine biosynthesis; carbamoyl phosphate from bicarbonate: step 1/1.</text>
</comment>
<comment type="pathway">
    <text evidence="1">Pyrimidine metabolism; UMP biosynthesis via de novo pathway; (S)-dihydroorotate from bicarbonate: step 1/3.</text>
</comment>
<comment type="subunit">
    <text evidence="1">Composed of two chains; the small (or glutamine) chain promotes the hydrolysis of glutamine to ammonia, which is used by the large (or ammonia) chain to synthesize carbamoyl phosphate. Tetramer of heterodimers (alpha,beta)4.</text>
</comment>
<comment type="domain">
    <text evidence="1">The large subunit is composed of 2 ATP-grasp domains that are involved in binding the 2 ATP molecules needed for carbamoyl phosphate synthesis. The N-terminal ATP-grasp domain (referred to as the carboxyphosphate synthetic component) catalyzes the ATP-dependent phosphorylation of hydrogencarbonate to carboxyphosphate and the subsequent nucleophilic attack by ammonia to form a carbamate intermediate. The C-terminal ATP-grasp domain (referred to as the carbamoyl phosphate synthetic component) then catalyzes the phosphorylation of carbamate with the second ATP to form the end product carbamoyl phosphate. The reactive and unstable enzyme intermediates are sequentially channeled from one active site to the next through the interior of the protein over a distance of at least 96 A.</text>
</comment>
<comment type="similarity">
    <text evidence="1">Belongs to the CarB family.</text>
</comment>
<keyword id="KW-0028">Amino-acid biosynthesis</keyword>
<keyword id="KW-0055">Arginine biosynthesis</keyword>
<keyword id="KW-0067">ATP-binding</keyword>
<keyword id="KW-0436">Ligase</keyword>
<keyword id="KW-0460">Magnesium</keyword>
<keyword id="KW-0464">Manganese</keyword>
<keyword id="KW-0479">Metal-binding</keyword>
<keyword id="KW-0547">Nucleotide-binding</keyword>
<keyword id="KW-0665">Pyrimidine biosynthesis</keyword>
<keyword id="KW-0677">Repeat</keyword>
<reference key="1">
    <citation type="journal article" date="2004" name="Proc. Natl. Acad. Sci. U.S.A.">
        <title>Complete genomes of two clinical Staphylococcus aureus strains: evidence for the rapid evolution of virulence and drug resistance.</title>
        <authorList>
            <person name="Holden M.T.G."/>
            <person name="Feil E.J."/>
            <person name="Lindsay J.A."/>
            <person name="Peacock S.J."/>
            <person name="Day N.P.J."/>
            <person name="Enright M.C."/>
            <person name="Foster T.J."/>
            <person name="Moore C.E."/>
            <person name="Hurst L."/>
            <person name="Atkin R."/>
            <person name="Barron A."/>
            <person name="Bason N."/>
            <person name="Bentley S.D."/>
            <person name="Chillingworth C."/>
            <person name="Chillingworth T."/>
            <person name="Churcher C."/>
            <person name="Clark L."/>
            <person name="Corton C."/>
            <person name="Cronin A."/>
            <person name="Doggett J."/>
            <person name="Dowd L."/>
            <person name="Feltwell T."/>
            <person name="Hance Z."/>
            <person name="Harris B."/>
            <person name="Hauser H."/>
            <person name="Holroyd S."/>
            <person name="Jagels K."/>
            <person name="James K.D."/>
            <person name="Lennard N."/>
            <person name="Line A."/>
            <person name="Mayes R."/>
            <person name="Moule S."/>
            <person name="Mungall K."/>
            <person name="Ormond D."/>
            <person name="Quail M.A."/>
            <person name="Rabbinowitsch E."/>
            <person name="Rutherford K.M."/>
            <person name="Sanders M."/>
            <person name="Sharp S."/>
            <person name="Simmonds M."/>
            <person name="Stevens K."/>
            <person name="Whitehead S."/>
            <person name="Barrell B.G."/>
            <person name="Spratt B.G."/>
            <person name="Parkhill J."/>
        </authorList>
    </citation>
    <scope>NUCLEOTIDE SEQUENCE [LARGE SCALE GENOMIC DNA]</scope>
    <source>
        <strain>MRSA252</strain>
    </source>
</reference>
<protein>
    <recommendedName>
        <fullName evidence="1">Carbamoyl phosphate synthase large chain</fullName>
        <ecNumber evidence="1">6.3.4.16</ecNumber>
        <ecNumber evidence="1">6.3.5.5</ecNumber>
    </recommendedName>
    <alternativeName>
        <fullName evidence="1">Carbamoyl phosphate synthetase ammonia chain</fullName>
    </alternativeName>
</protein>
<gene>
    <name evidence="1" type="primary">carB</name>
    <name type="synonym">pyrAB</name>
    <name type="ordered locus">SAR1179</name>
</gene>
<name>CARB_STAAR</name>
<sequence length="1057" mass="117132">MPKRNDIKTILVIGSGPIIIGQAAEFDYAGTQACLALKEEGYRVILVNSNPATIMTDKEIADKVYIEPLTHNFIARIIRKEQPDALLPTLGGQTGLNMAIQLHESGVLQDNNVQLLGTELTSIQQAEDREMFRTLMNDLNVPVPESDIVNTVEQAFKFKEQVGYPLIVRPAFTMGGTGGGICHNDEELHEIVSNGLHYSPATQCLLEKSIAGFKEIEYEVMRDKNDNAIVVCNMENIDPVGIHTGDSIVVAPSQTLSDVEYQMLRDVSLKVIRALGIEGGCNVQLALDPHSFDYYIIEVNPRVSRSSALASKATGYPIAKLAAKIAVGLTLDEMLNPITGTSYAAFEPTLDYVISKIPRFPFDKFEKGERELGTQMKATGEVMAIGRTYEESLLKAIRSLEYGVHHLGLPNGESFDLDYIKERISHQDDERLFFIGEAIRRGTTLEEIHNMTQIDYFFLHKFQNIIDIEHQLKEHQGDLEYLKYAKDYGFSDKTIAHRFNMTEEEVYQLRMENDIKPVYKMVDTCAAEFESSTPYYYGTYETENESIVTDKEKILVLGSGPIRIGQGVEFDYATVHAVWAIQKAGYEAIIVNNNPETVSTDFSISDKLYFEPLTEEDVMNIINLEKPKGVVVQFGGQTAINLADKLAKHGVKILGTSLENLNRAEDRKEFEALLRKINVPQPQGKTATSPEEALANAAEIGYPVVVRPSYVLGGRAMEIVDNDKELENYMTQAVKASPEHPVLVDRYLTGKEIEVDAICDGETVIIPGIMEHIERAGVHSGDSIAVYPPQTLTEDELATLEDYTIKLAKGLNIIGLINIQFVIAHDGVYVLEVNPRSSRTVPFLSKITDIPMAQLAMRAIIGEKLTDMGYQEGVQPYAEGVFVKAPVFSFNKLKNVDITLGPEMKSTGEVMGKDTTLEKALFKGLTGSGVEVKDHGTVLMTVSDKDKEEVVKLAQCLNEVGYKILATSGTANKLAEYDIPAEVVGKIGGENDLLTRIQNGDVQIVINTMTKGKEVERDGFQIRRTTVENGIPCLTSLDTANALTNVIESMTFTMRQM</sequence>
<proteinExistence type="inferred from homology"/>
<accession>Q6GHN2</accession>
<organism>
    <name type="scientific">Staphylococcus aureus (strain MRSA252)</name>
    <dbReference type="NCBI Taxonomy" id="282458"/>
    <lineage>
        <taxon>Bacteria</taxon>
        <taxon>Bacillati</taxon>
        <taxon>Bacillota</taxon>
        <taxon>Bacilli</taxon>
        <taxon>Bacillales</taxon>
        <taxon>Staphylococcaceae</taxon>
        <taxon>Staphylococcus</taxon>
    </lineage>
</organism>
<feature type="chain" id="PRO_0000145040" description="Carbamoyl phosphate synthase large chain">
    <location>
        <begin position="1"/>
        <end position="1057"/>
    </location>
</feature>
<feature type="domain" description="ATP-grasp 1" evidence="1">
    <location>
        <begin position="133"/>
        <end position="327"/>
    </location>
</feature>
<feature type="domain" description="ATP-grasp 2" evidence="1">
    <location>
        <begin position="671"/>
        <end position="861"/>
    </location>
</feature>
<feature type="domain" description="MGS-like" evidence="1">
    <location>
        <begin position="930"/>
        <end position="1057"/>
    </location>
</feature>
<feature type="region of interest" description="Carboxyphosphate synthetic domain" evidence="1">
    <location>
        <begin position="1"/>
        <end position="401"/>
    </location>
</feature>
<feature type="region of interest" description="Oligomerization domain" evidence="1">
    <location>
        <begin position="402"/>
        <end position="546"/>
    </location>
</feature>
<feature type="region of interest" description="Carbamoyl phosphate synthetic domain" evidence="1">
    <location>
        <begin position="547"/>
        <end position="929"/>
    </location>
</feature>
<feature type="region of interest" description="Allosteric domain" evidence="1">
    <location>
        <begin position="930"/>
        <end position="1057"/>
    </location>
</feature>
<feature type="binding site" evidence="1">
    <location>
        <position position="129"/>
    </location>
    <ligand>
        <name>ATP</name>
        <dbReference type="ChEBI" id="CHEBI:30616"/>
        <label>1</label>
    </ligand>
</feature>
<feature type="binding site" evidence="1">
    <location>
        <position position="169"/>
    </location>
    <ligand>
        <name>ATP</name>
        <dbReference type="ChEBI" id="CHEBI:30616"/>
        <label>1</label>
    </ligand>
</feature>
<feature type="binding site" evidence="1">
    <location>
        <position position="175"/>
    </location>
    <ligand>
        <name>ATP</name>
        <dbReference type="ChEBI" id="CHEBI:30616"/>
        <label>1</label>
    </ligand>
</feature>
<feature type="binding site" evidence="1">
    <location>
        <position position="176"/>
    </location>
    <ligand>
        <name>ATP</name>
        <dbReference type="ChEBI" id="CHEBI:30616"/>
        <label>1</label>
    </ligand>
</feature>
<feature type="binding site" evidence="1">
    <location>
        <position position="208"/>
    </location>
    <ligand>
        <name>ATP</name>
        <dbReference type="ChEBI" id="CHEBI:30616"/>
        <label>1</label>
    </ligand>
</feature>
<feature type="binding site" evidence="1">
    <location>
        <position position="210"/>
    </location>
    <ligand>
        <name>ATP</name>
        <dbReference type="ChEBI" id="CHEBI:30616"/>
        <label>1</label>
    </ligand>
</feature>
<feature type="binding site" evidence="1">
    <location>
        <position position="215"/>
    </location>
    <ligand>
        <name>ATP</name>
        <dbReference type="ChEBI" id="CHEBI:30616"/>
        <label>1</label>
    </ligand>
</feature>
<feature type="binding site" evidence="1">
    <location>
        <position position="241"/>
    </location>
    <ligand>
        <name>ATP</name>
        <dbReference type="ChEBI" id="CHEBI:30616"/>
        <label>1</label>
    </ligand>
</feature>
<feature type="binding site" evidence="1">
    <location>
        <position position="242"/>
    </location>
    <ligand>
        <name>ATP</name>
        <dbReference type="ChEBI" id="CHEBI:30616"/>
        <label>1</label>
    </ligand>
</feature>
<feature type="binding site" evidence="1">
    <location>
        <position position="243"/>
    </location>
    <ligand>
        <name>ATP</name>
        <dbReference type="ChEBI" id="CHEBI:30616"/>
        <label>1</label>
    </ligand>
</feature>
<feature type="binding site" evidence="1">
    <location>
        <position position="284"/>
    </location>
    <ligand>
        <name>ATP</name>
        <dbReference type="ChEBI" id="CHEBI:30616"/>
        <label>1</label>
    </ligand>
</feature>
<feature type="binding site" evidence="1">
    <location>
        <position position="284"/>
    </location>
    <ligand>
        <name>Mg(2+)</name>
        <dbReference type="ChEBI" id="CHEBI:18420"/>
        <label>1</label>
    </ligand>
</feature>
<feature type="binding site" evidence="1">
    <location>
        <position position="284"/>
    </location>
    <ligand>
        <name>Mn(2+)</name>
        <dbReference type="ChEBI" id="CHEBI:29035"/>
        <label>1</label>
    </ligand>
</feature>
<feature type="binding site" evidence="1">
    <location>
        <position position="298"/>
    </location>
    <ligand>
        <name>ATP</name>
        <dbReference type="ChEBI" id="CHEBI:30616"/>
        <label>1</label>
    </ligand>
</feature>
<feature type="binding site" evidence="1">
    <location>
        <position position="298"/>
    </location>
    <ligand>
        <name>Mg(2+)</name>
        <dbReference type="ChEBI" id="CHEBI:18420"/>
        <label>1</label>
    </ligand>
</feature>
<feature type="binding site" evidence="1">
    <location>
        <position position="298"/>
    </location>
    <ligand>
        <name>Mg(2+)</name>
        <dbReference type="ChEBI" id="CHEBI:18420"/>
        <label>2</label>
    </ligand>
</feature>
<feature type="binding site" evidence="1">
    <location>
        <position position="298"/>
    </location>
    <ligand>
        <name>Mn(2+)</name>
        <dbReference type="ChEBI" id="CHEBI:29035"/>
        <label>1</label>
    </ligand>
</feature>
<feature type="binding site" evidence="1">
    <location>
        <position position="298"/>
    </location>
    <ligand>
        <name>Mn(2+)</name>
        <dbReference type="ChEBI" id="CHEBI:29035"/>
        <label>2</label>
    </ligand>
</feature>
<feature type="binding site" evidence="1">
    <location>
        <position position="300"/>
    </location>
    <ligand>
        <name>Mg(2+)</name>
        <dbReference type="ChEBI" id="CHEBI:18420"/>
        <label>2</label>
    </ligand>
</feature>
<feature type="binding site" evidence="1">
    <location>
        <position position="300"/>
    </location>
    <ligand>
        <name>Mn(2+)</name>
        <dbReference type="ChEBI" id="CHEBI:29035"/>
        <label>2</label>
    </ligand>
</feature>
<feature type="binding site" evidence="1">
    <location>
        <position position="707"/>
    </location>
    <ligand>
        <name>ATP</name>
        <dbReference type="ChEBI" id="CHEBI:30616"/>
        <label>2</label>
    </ligand>
</feature>
<feature type="binding site" evidence="1">
    <location>
        <position position="746"/>
    </location>
    <ligand>
        <name>ATP</name>
        <dbReference type="ChEBI" id="CHEBI:30616"/>
        <label>2</label>
    </ligand>
</feature>
<feature type="binding site" evidence="1">
    <location>
        <position position="748"/>
    </location>
    <ligand>
        <name>ATP</name>
        <dbReference type="ChEBI" id="CHEBI:30616"/>
        <label>2</label>
    </ligand>
</feature>
<feature type="binding site" evidence="1">
    <location>
        <position position="752"/>
    </location>
    <ligand>
        <name>ATP</name>
        <dbReference type="ChEBI" id="CHEBI:30616"/>
        <label>2</label>
    </ligand>
</feature>
<feature type="binding site" evidence="1">
    <location>
        <position position="777"/>
    </location>
    <ligand>
        <name>ATP</name>
        <dbReference type="ChEBI" id="CHEBI:30616"/>
        <label>2</label>
    </ligand>
</feature>
<feature type="binding site" evidence="1">
    <location>
        <position position="778"/>
    </location>
    <ligand>
        <name>ATP</name>
        <dbReference type="ChEBI" id="CHEBI:30616"/>
        <label>2</label>
    </ligand>
</feature>
<feature type="binding site" evidence="1">
    <location>
        <position position="779"/>
    </location>
    <ligand>
        <name>ATP</name>
        <dbReference type="ChEBI" id="CHEBI:30616"/>
        <label>2</label>
    </ligand>
</feature>
<feature type="binding site" evidence="1">
    <location>
        <position position="780"/>
    </location>
    <ligand>
        <name>ATP</name>
        <dbReference type="ChEBI" id="CHEBI:30616"/>
        <label>2</label>
    </ligand>
</feature>
<feature type="binding site" evidence="1">
    <location>
        <position position="820"/>
    </location>
    <ligand>
        <name>ATP</name>
        <dbReference type="ChEBI" id="CHEBI:30616"/>
        <label>2</label>
    </ligand>
</feature>
<feature type="binding site" evidence="1">
    <location>
        <position position="820"/>
    </location>
    <ligand>
        <name>Mg(2+)</name>
        <dbReference type="ChEBI" id="CHEBI:18420"/>
        <label>3</label>
    </ligand>
</feature>
<feature type="binding site" evidence="1">
    <location>
        <position position="820"/>
    </location>
    <ligand>
        <name>Mn(2+)</name>
        <dbReference type="ChEBI" id="CHEBI:29035"/>
        <label>3</label>
    </ligand>
</feature>
<feature type="binding site" evidence="1">
    <location>
        <position position="832"/>
    </location>
    <ligand>
        <name>ATP</name>
        <dbReference type="ChEBI" id="CHEBI:30616"/>
        <label>2</label>
    </ligand>
</feature>
<feature type="binding site" evidence="1">
    <location>
        <position position="832"/>
    </location>
    <ligand>
        <name>Mg(2+)</name>
        <dbReference type="ChEBI" id="CHEBI:18420"/>
        <label>3</label>
    </ligand>
</feature>
<feature type="binding site" evidence="1">
    <location>
        <position position="832"/>
    </location>
    <ligand>
        <name>Mg(2+)</name>
        <dbReference type="ChEBI" id="CHEBI:18420"/>
        <label>4</label>
    </ligand>
</feature>
<feature type="binding site" evidence="1">
    <location>
        <position position="832"/>
    </location>
    <ligand>
        <name>Mn(2+)</name>
        <dbReference type="ChEBI" id="CHEBI:29035"/>
        <label>3</label>
    </ligand>
</feature>
<feature type="binding site" evidence="1">
    <location>
        <position position="832"/>
    </location>
    <ligand>
        <name>Mn(2+)</name>
        <dbReference type="ChEBI" id="CHEBI:29035"/>
        <label>4</label>
    </ligand>
</feature>
<feature type="binding site" evidence="1">
    <location>
        <position position="834"/>
    </location>
    <ligand>
        <name>Mg(2+)</name>
        <dbReference type="ChEBI" id="CHEBI:18420"/>
        <label>4</label>
    </ligand>
</feature>
<feature type="binding site" evidence="1">
    <location>
        <position position="834"/>
    </location>
    <ligand>
        <name>Mn(2+)</name>
        <dbReference type="ChEBI" id="CHEBI:29035"/>
        <label>4</label>
    </ligand>
</feature>